<organism>
    <name type="scientific">Conus figulinus</name>
    <name type="common">Fig cone</name>
    <dbReference type="NCBI Taxonomy" id="101301"/>
    <lineage>
        <taxon>Eukaryota</taxon>
        <taxon>Metazoa</taxon>
        <taxon>Spiralia</taxon>
        <taxon>Lophotrochozoa</taxon>
        <taxon>Mollusca</taxon>
        <taxon>Gastropoda</taxon>
        <taxon>Caenogastropoda</taxon>
        <taxon>Neogastropoda</taxon>
        <taxon>Conoidea</taxon>
        <taxon>Conidae</taxon>
        <taxon>Conus</taxon>
        <taxon>Dendroconus</taxon>
    </lineage>
</organism>
<accession>P0C610</accession>
<keyword id="KW-0102">Bromination</keyword>
<keyword id="KW-0208">D-amino acid</keyword>
<keyword id="KW-1015">Disulfide bond</keyword>
<keyword id="KW-0379">Hydroxylation</keyword>
<keyword id="KW-0872">Ion channel impairing toxin</keyword>
<keyword id="KW-0528">Neurotoxin</keyword>
<keyword id="KW-0964">Secreted</keyword>
<keyword id="KW-0800">Toxin</keyword>
<keyword id="KW-0738">Voltage-gated sodium channel impairing toxin</keyword>
<comment type="function">
    <text evidence="1">Iota-conotoxins bind to voltage-gated sodium channels (Nav) and act as agonists by shifting the voltage-dependence of activation to more hyperpolarized levels. Produces general excitatory symptoms (By similarity).</text>
</comment>
<comment type="subcellular location">
    <subcellularLocation>
        <location evidence="1">Secreted</location>
    </subcellularLocation>
</comment>
<comment type="tissue specificity">
    <text>Expressed by the venom duct.</text>
</comment>
<comment type="domain">
    <text>The cysteine framework is XI (C-C-CC-CC-C-C).</text>
</comment>
<comment type="similarity">
    <text evidence="3">Belongs to the conotoxin I1 superfamily.</text>
</comment>
<evidence type="ECO:0000250" key="1"/>
<evidence type="ECO:0000250" key="2">
    <source>
        <dbReference type="UniProtKB" id="Q7Z094"/>
    </source>
</evidence>
<evidence type="ECO:0000305" key="3"/>
<sequence>GCKKDRKPCSYHADCCNCCLSGICAPSTNWILPGCSTSSFFKI</sequence>
<feature type="chain" id="PRO_0000314086" description="Iota-conotoxin-like Fi11.6">
    <location>
        <begin position="1"/>
        <end position="43"/>
    </location>
</feature>
<feature type="modified residue" description="4-hydroxyproline" evidence="1">
    <location>
        <position position="8"/>
    </location>
</feature>
<feature type="modified residue" description="4-hydroxyproline" evidence="1">
    <location>
        <position position="26"/>
    </location>
</feature>
<feature type="modified residue" description="6'-bromotryptophan" evidence="1">
    <location>
        <position position="30"/>
    </location>
</feature>
<feature type="modified residue" description="D-phenylalanine" evidence="1">
    <location>
        <position position="41"/>
    </location>
</feature>
<feature type="disulfide bond" evidence="2">
    <location>
        <begin position="2"/>
        <end position="16"/>
    </location>
</feature>
<feature type="disulfide bond" evidence="2">
    <location>
        <begin position="9"/>
        <end position="19"/>
    </location>
</feature>
<feature type="disulfide bond" evidence="2">
    <location>
        <begin position="15"/>
        <end position="24"/>
    </location>
</feature>
<feature type="disulfide bond" evidence="2">
    <location>
        <begin position="18"/>
        <end position="35"/>
    </location>
</feature>
<name>I1B6_CONFI</name>
<proteinExistence type="evidence at transcript level"/>
<dbReference type="ConoServer" id="2809">
    <property type="toxin name" value="Fi11.6"/>
</dbReference>
<dbReference type="GO" id="GO:0005576">
    <property type="term" value="C:extracellular region"/>
    <property type="evidence" value="ECO:0007669"/>
    <property type="project" value="UniProtKB-SubCell"/>
</dbReference>
<dbReference type="GO" id="GO:0017080">
    <property type="term" value="F:sodium channel regulator activity"/>
    <property type="evidence" value="ECO:0007669"/>
    <property type="project" value="UniProtKB-KW"/>
</dbReference>
<dbReference type="GO" id="GO:0090729">
    <property type="term" value="F:toxin activity"/>
    <property type="evidence" value="ECO:0007669"/>
    <property type="project" value="UniProtKB-KW"/>
</dbReference>
<dbReference type="Gene3D" id="4.10.40.80">
    <property type="match status" value="1"/>
</dbReference>
<dbReference type="InterPro" id="IPR013141">
    <property type="entry name" value="Conotoxin-I_CS"/>
</dbReference>
<dbReference type="InterPro" id="IPR012624">
    <property type="entry name" value="Toxin_19"/>
</dbReference>
<dbReference type="Pfam" id="PF08088">
    <property type="entry name" value="Toxin_19"/>
    <property type="match status" value="1"/>
</dbReference>
<dbReference type="PROSITE" id="PS60019">
    <property type="entry name" value="I_CONOTOXIN"/>
    <property type="match status" value="1"/>
</dbReference>
<protein>
    <recommendedName>
        <fullName>Iota-conotoxin-like Fi11.6</fullName>
    </recommendedName>
</protein>
<reference key="1">
    <citation type="journal article" date="2008" name="Toxicon">
        <title>I(1)-superfamily conotoxins and prediction of single D-amino acid occurrence.</title>
        <authorList>
            <person name="Buczek O."/>
            <person name="Jimenez E.C."/>
            <person name="Yoshikami D."/>
            <person name="Imperial J.S."/>
            <person name="Watkins M."/>
            <person name="Morrison A."/>
            <person name="Olivera B.M."/>
        </authorList>
    </citation>
    <scope>NUCLEOTIDE SEQUENCE [MRNA]</scope>
    <source>
        <tissue>Venom duct</tissue>
    </source>
</reference>